<dbReference type="EC" id="1.11.1.7"/>
<dbReference type="EMBL" id="EF059719">
    <property type="protein sequence ID" value="ABN48845.1"/>
    <property type="molecule type" value="mRNA"/>
</dbReference>
<dbReference type="SMR" id="A5H454"/>
<dbReference type="STRING" id="4577.A5H454"/>
<dbReference type="PeroxiBase" id="762">
    <property type="entry name" value="ZmPrx66"/>
</dbReference>
<dbReference type="GlyCosmos" id="A5H454">
    <property type="glycosylation" value="3 sites, No reported glycans"/>
</dbReference>
<dbReference type="PaxDb" id="4577-GRMZM2G133475_P01"/>
<dbReference type="eggNOG" id="ENOG502QU1K">
    <property type="taxonomic scope" value="Eukaryota"/>
</dbReference>
<dbReference type="InParanoid" id="A5H454"/>
<dbReference type="Proteomes" id="UP000007305">
    <property type="component" value="Unplaced"/>
</dbReference>
<dbReference type="ExpressionAtlas" id="A5H454">
    <property type="expression patterns" value="baseline and differential"/>
</dbReference>
<dbReference type="GO" id="GO:0005576">
    <property type="term" value="C:extracellular region"/>
    <property type="evidence" value="ECO:0007669"/>
    <property type="project" value="UniProtKB-SubCell"/>
</dbReference>
<dbReference type="GO" id="GO:0020037">
    <property type="term" value="F:heme binding"/>
    <property type="evidence" value="ECO:0007669"/>
    <property type="project" value="InterPro"/>
</dbReference>
<dbReference type="GO" id="GO:0140825">
    <property type="term" value="F:lactoperoxidase activity"/>
    <property type="evidence" value="ECO:0007669"/>
    <property type="project" value="UniProtKB-EC"/>
</dbReference>
<dbReference type="GO" id="GO:0046872">
    <property type="term" value="F:metal ion binding"/>
    <property type="evidence" value="ECO:0007669"/>
    <property type="project" value="UniProtKB-KW"/>
</dbReference>
<dbReference type="GO" id="GO:0042744">
    <property type="term" value="P:hydrogen peroxide catabolic process"/>
    <property type="evidence" value="ECO:0007669"/>
    <property type="project" value="UniProtKB-KW"/>
</dbReference>
<dbReference type="GO" id="GO:0006979">
    <property type="term" value="P:response to oxidative stress"/>
    <property type="evidence" value="ECO:0007669"/>
    <property type="project" value="InterPro"/>
</dbReference>
<dbReference type="CDD" id="cd00693">
    <property type="entry name" value="secretory_peroxidase"/>
    <property type="match status" value="1"/>
</dbReference>
<dbReference type="FunFam" id="1.10.420.10:FF:000006">
    <property type="entry name" value="Peroxidase"/>
    <property type="match status" value="1"/>
</dbReference>
<dbReference type="FunFam" id="1.10.520.10:FF:000009">
    <property type="entry name" value="Peroxidase"/>
    <property type="match status" value="1"/>
</dbReference>
<dbReference type="Gene3D" id="1.10.520.10">
    <property type="match status" value="1"/>
</dbReference>
<dbReference type="Gene3D" id="1.10.420.10">
    <property type="entry name" value="Peroxidase, domain 2"/>
    <property type="match status" value="1"/>
</dbReference>
<dbReference type="InterPro" id="IPR002016">
    <property type="entry name" value="Haem_peroxidase"/>
</dbReference>
<dbReference type="InterPro" id="IPR010255">
    <property type="entry name" value="Haem_peroxidase_sf"/>
</dbReference>
<dbReference type="InterPro" id="IPR000823">
    <property type="entry name" value="Peroxidase_pln"/>
</dbReference>
<dbReference type="InterPro" id="IPR019794">
    <property type="entry name" value="Peroxidases_AS"/>
</dbReference>
<dbReference type="InterPro" id="IPR019793">
    <property type="entry name" value="Peroxidases_heam-ligand_BS"/>
</dbReference>
<dbReference type="InterPro" id="IPR033905">
    <property type="entry name" value="Secretory_peroxidase"/>
</dbReference>
<dbReference type="PANTHER" id="PTHR31388:SF13">
    <property type="entry name" value="PEROXIDASE 2"/>
    <property type="match status" value="1"/>
</dbReference>
<dbReference type="PANTHER" id="PTHR31388">
    <property type="entry name" value="PEROXIDASE 72-RELATED"/>
    <property type="match status" value="1"/>
</dbReference>
<dbReference type="Pfam" id="PF00141">
    <property type="entry name" value="peroxidase"/>
    <property type="match status" value="1"/>
</dbReference>
<dbReference type="PRINTS" id="PR00458">
    <property type="entry name" value="PEROXIDASE"/>
</dbReference>
<dbReference type="PRINTS" id="PR00461">
    <property type="entry name" value="PLPEROXIDASE"/>
</dbReference>
<dbReference type="SUPFAM" id="SSF48113">
    <property type="entry name" value="Heme-dependent peroxidases"/>
    <property type="match status" value="1"/>
</dbReference>
<dbReference type="PROSITE" id="PS00435">
    <property type="entry name" value="PEROXIDASE_1"/>
    <property type="match status" value="1"/>
</dbReference>
<dbReference type="PROSITE" id="PS00436">
    <property type="entry name" value="PEROXIDASE_2"/>
    <property type="match status" value="1"/>
</dbReference>
<dbReference type="PROSITE" id="PS50873">
    <property type="entry name" value="PEROXIDASE_4"/>
    <property type="match status" value="1"/>
</dbReference>
<organism>
    <name type="scientific">Zea mays</name>
    <name type="common">Maize</name>
    <dbReference type="NCBI Taxonomy" id="4577"/>
    <lineage>
        <taxon>Eukaryota</taxon>
        <taxon>Viridiplantae</taxon>
        <taxon>Streptophyta</taxon>
        <taxon>Embryophyta</taxon>
        <taxon>Tracheophyta</taxon>
        <taxon>Spermatophyta</taxon>
        <taxon>Magnoliopsida</taxon>
        <taxon>Liliopsida</taxon>
        <taxon>Poales</taxon>
        <taxon>Poaceae</taxon>
        <taxon>PACMAD clade</taxon>
        <taxon>Panicoideae</taxon>
        <taxon>Andropogonodae</taxon>
        <taxon>Andropogoneae</taxon>
        <taxon>Tripsacinae</taxon>
        <taxon>Zea</taxon>
    </lineage>
</organism>
<keyword id="KW-0106">Calcium</keyword>
<keyword id="KW-1015">Disulfide bond</keyword>
<keyword id="KW-0325">Glycoprotein</keyword>
<keyword id="KW-0349">Heme</keyword>
<keyword id="KW-0376">Hydrogen peroxide</keyword>
<keyword id="KW-0408">Iron</keyword>
<keyword id="KW-0479">Metal-binding</keyword>
<keyword id="KW-0560">Oxidoreductase</keyword>
<keyword id="KW-0575">Peroxidase</keyword>
<keyword id="KW-0873">Pyrrolidone carboxylic acid</keyword>
<keyword id="KW-1185">Reference proteome</keyword>
<keyword id="KW-0964">Secreted</keyword>
<keyword id="KW-0732">Signal</keyword>
<proteinExistence type="evidence at protein level"/>
<feature type="signal peptide" evidence="1">
    <location>
        <begin position="1"/>
        <end position="29"/>
    </location>
</feature>
<feature type="chain" id="PRO_0000359405" description="Peroxidase 66">
    <location>
        <begin position="30"/>
        <end position="320"/>
    </location>
</feature>
<feature type="active site" description="Proton acceptor" evidence="2 3">
    <location>
        <position position="71"/>
    </location>
</feature>
<feature type="binding site" evidence="2">
    <location>
        <position position="72"/>
    </location>
    <ligand>
        <name>Ca(2+)</name>
        <dbReference type="ChEBI" id="CHEBI:29108"/>
        <label>1</label>
    </ligand>
</feature>
<feature type="binding site" evidence="2">
    <location>
        <position position="75"/>
    </location>
    <ligand>
        <name>Ca(2+)</name>
        <dbReference type="ChEBI" id="CHEBI:29108"/>
        <label>1</label>
    </ligand>
</feature>
<feature type="binding site" evidence="2">
    <location>
        <position position="77"/>
    </location>
    <ligand>
        <name>Ca(2+)</name>
        <dbReference type="ChEBI" id="CHEBI:29108"/>
        <label>1</label>
    </ligand>
</feature>
<feature type="binding site" evidence="2">
    <location>
        <position position="79"/>
    </location>
    <ligand>
        <name>Ca(2+)</name>
        <dbReference type="ChEBI" id="CHEBI:29108"/>
        <label>1</label>
    </ligand>
</feature>
<feature type="binding site" evidence="2">
    <location>
        <position position="81"/>
    </location>
    <ligand>
        <name>Ca(2+)</name>
        <dbReference type="ChEBI" id="CHEBI:29108"/>
        <label>1</label>
    </ligand>
</feature>
<feature type="binding site" evidence="2">
    <location>
        <position position="165"/>
    </location>
    <ligand>
        <name>substrate</name>
    </ligand>
</feature>
<feature type="binding site" description="axial binding residue" evidence="2">
    <location>
        <position position="195"/>
    </location>
    <ligand>
        <name>heme b</name>
        <dbReference type="ChEBI" id="CHEBI:60344"/>
    </ligand>
    <ligandPart>
        <name>Fe</name>
        <dbReference type="ChEBI" id="CHEBI:18248"/>
    </ligandPart>
</feature>
<feature type="binding site" evidence="2">
    <location>
        <position position="196"/>
    </location>
    <ligand>
        <name>Ca(2+)</name>
        <dbReference type="ChEBI" id="CHEBI:29108"/>
        <label>2</label>
    </ligand>
</feature>
<feature type="binding site" evidence="2">
    <location>
        <position position="239"/>
    </location>
    <ligand>
        <name>Ca(2+)</name>
        <dbReference type="ChEBI" id="CHEBI:29108"/>
        <label>2</label>
    </ligand>
</feature>
<feature type="binding site" evidence="2">
    <location>
        <position position="242"/>
    </location>
    <ligand>
        <name>Ca(2+)</name>
        <dbReference type="ChEBI" id="CHEBI:29108"/>
        <label>2</label>
    </ligand>
</feature>
<feature type="binding site" evidence="2">
    <location>
        <position position="247"/>
    </location>
    <ligand>
        <name>Ca(2+)</name>
        <dbReference type="ChEBI" id="CHEBI:29108"/>
        <label>2</label>
    </ligand>
</feature>
<feature type="site" description="Transition state stabilizer" evidence="2">
    <location>
        <position position="67"/>
    </location>
</feature>
<feature type="modified residue" description="Pyrrolidone carboxylic acid" evidence="2">
    <location>
        <position position="30"/>
    </location>
</feature>
<feature type="glycosylation site" description="N-linked (GlcNAc...) asparagine" evidence="1">
    <location>
        <position position="85"/>
    </location>
</feature>
<feature type="glycosylation site" description="N-linked (GlcNAc...) asparagine" evidence="1">
    <location>
        <position position="96"/>
    </location>
</feature>
<feature type="glycosylation site" description="N-linked (GlcNAc...) asparagine" evidence="1">
    <location>
        <position position="211"/>
    </location>
</feature>
<feature type="disulfide bond" evidence="2">
    <location>
        <begin position="40"/>
        <end position="118"/>
    </location>
</feature>
<feature type="disulfide bond" evidence="2">
    <location>
        <begin position="73"/>
        <end position="78"/>
    </location>
</feature>
<feature type="disulfide bond" evidence="2">
    <location>
        <begin position="124"/>
        <end position="315"/>
    </location>
</feature>
<feature type="disulfide bond" evidence="2">
    <location>
        <begin position="202"/>
        <end position="227"/>
    </location>
</feature>
<comment type="function">
    <text>Removal of H(2)O(2), oxidation of toxic reductants, biosynthesis and degradation of lignin, suberization, auxin catabolism, response to environmental stresses such as wounding, pathogen attack and oxidative stress. These functions might be dependent on each isozyme/isoform in each plant tissue.</text>
</comment>
<comment type="catalytic activity">
    <reaction>
        <text>2 a phenolic donor + H2O2 = 2 a phenolic radical donor + 2 H2O</text>
        <dbReference type="Rhea" id="RHEA:56136"/>
        <dbReference type="ChEBI" id="CHEBI:15377"/>
        <dbReference type="ChEBI" id="CHEBI:16240"/>
        <dbReference type="ChEBI" id="CHEBI:139520"/>
        <dbReference type="ChEBI" id="CHEBI:139521"/>
        <dbReference type="EC" id="1.11.1.7"/>
    </reaction>
</comment>
<comment type="cofactor">
    <cofactor evidence="2">
        <name>heme b</name>
        <dbReference type="ChEBI" id="CHEBI:60344"/>
    </cofactor>
    <text evidence="2">Binds 1 heme b (iron(II)-protoporphyrin IX) group per subunit.</text>
</comment>
<comment type="cofactor">
    <cofactor evidence="2">
        <name>Ca(2+)</name>
        <dbReference type="ChEBI" id="CHEBI:29108"/>
    </cofactor>
    <text evidence="2">Binds 2 calcium ions per subunit.</text>
</comment>
<comment type="biophysicochemical properties">
    <kinetics>
        <Vmax evidence="4">54.7 umol/min/mg enzyme with guaiacol as substrate</Vmax>
        <text>In the presence of H(2)O(2).</text>
    </kinetics>
</comment>
<comment type="subcellular location">
    <subcellularLocation>
        <location evidence="5">Secreted</location>
    </subcellularLocation>
</comment>
<comment type="similarity">
    <text evidence="2">Belongs to the peroxidase family. Classical plant (class III) peroxidase subfamily.</text>
</comment>
<gene>
    <name type="primary">PER66</name>
    <name type="synonym">POX3-2</name>
    <name type="synonym">PRX66</name>
</gene>
<sequence>MAASVSASCLNRLSSLAVVLVALASAASAQLSSTFYDRSCPNALSTIRSGVNSAVRQEPRVGASLLRLHFHDCFVRGCDASLLLNDTSGEQSQGPNLTLNPRGFVVVNSIKAQVESVCPGIVSCADILAVAARDGVVALGGPSWTVLLGRRDSTASFAGQTSDLPPPTSSLGQLLSAYNKKNLNPTDMVALSGAHTIGQAQCSSFNDHIYNDTNINSAFAASLRANCPRAGSTALAPLDTTTPNAFDNAYYTNLLSQKGLLHSDQELFNSGSTDSTVRSFASSTSAFNSAFATAMVKMGNLSPQTGTQGQIRRSCWKVNS</sequence>
<name>PER66_MAIZE</name>
<accession>A5H454</accession>
<reference key="1">
    <citation type="journal article" date="2008" name="J. Proteomics">
        <title>Membrane-bound class III peroxidases: identification, biochemical properties and sequence analysis of isoenzymes purified from maize (Zea mays L.) roots.</title>
        <authorList>
            <person name="Mika A."/>
            <person name="Buck F."/>
            <person name="Luethje S."/>
        </authorList>
    </citation>
    <scope>NUCLEOTIDE SEQUENCE [MRNA]</scope>
    <scope>IDENTIFICATION BY MASS SPECTROMETRY</scope>
    <scope>BIOPHYSICOCHEMICAL PROPERTIES</scope>
    <source>
        <strain>cv. B73</strain>
    </source>
</reference>
<evidence type="ECO:0000255" key="1"/>
<evidence type="ECO:0000255" key="2">
    <source>
        <dbReference type="PROSITE-ProRule" id="PRU00297"/>
    </source>
</evidence>
<evidence type="ECO:0000255" key="3">
    <source>
        <dbReference type="PROSITE-ProRule" id="PRU10012"/>
    </source>
</evidence>
<evidence type="ECO:0000269" key="4">
    <source>
    </source>
</evidence>
<evidence type="ECO:0000305" key="5"/>
<protein>
    <recommendedName>
        <fullName>Peroxidase 66</fullName>
        <ecNumber>1.11.1.7</ecNumber>
    </recommendedName>
    <alternativeName>
        <fullName>Plasma membrane-bound peroxidase 3-2</fullName>
        <shortName>pmPOX3-2</shortName>
    </alternativeName>
</protein>